<sequence>MDPKNLNRHQVPNFLNPPPPPRNQGLVDDDAASAVVSDENRKPTTEIKDFQIVVSASDKEPNKKSQNQNQLGPKRSSNKDRHTKVEGRGRRIRMPALCAARIFQLTRELGHKSDGETIQWLLQQAEPSIIAATGSGTIPASALASSAATSNHHQGGSLTAGLMISHDLDGGSSSSGRPLNWGIGGGEGVSRSSLPTGLWPNVAGFGSGVPTTGLMSEGAGYRIGFPGFDFPGVGHMSFASILGGNHNQMPGLELGLSQEGNVGVLNPQSFTQIYQQMGQAQAQAQGRVLHHMHHNHEEHQQESGEKDDSQGSGR</sequence>
<dbReference type="EMBL" id="AJ291749">
    <property type="protein sequence ID" value="CAC18326.1"/>
    <property type="molecule type" value="mRNA"/>
</dbReference>
<dbReference type="EMBL" id="AB026649">
    <property type="protein sequence ID" value="BAB01082.1"/>
    <property type="molecule type" value="Genomic_DNA"/>
</dbReference>
<dbReference type="EMBL" id="CP002686">
    <property type="protein sequence ID" value="AEE77254.1"/>
    <property type="molecule type" value="Genomic_DNA"/>
</dbReference>
<dbReference type="EMBL" id="CP002686">
    <property type="protein sequence ID" value="ANM65877.1"/>
    <property type="molecule type" value="Genomic_DNA"/>
</dbReference>
<dbReference type="EMBL" id="AK118178">
    <property type="protein sequence ID" value="BAC42801.1"/>
    <property type="molecule type" value="mRNA"/>
</dbReference>
<dbReference type="EMBL" id="BT006043">
    <property type="protein sequence ID" value="AAP04029.1"/>
    <property type="molecule type" value="mRNA"/>
</dbReference>
<dbReference type="RefSeq" id="NP_001327814.1">
    <property type="nucleotide sequence ID" value="NM_001338848.1"/>
</dbReference>
<dbReference type="RefSeq" id="NP_189337.1">
    <property type="nucleotide sequence ID" value="NM_113615.4"/>
</dbReference>
<dbReference type="SMR" id="Q9LSD5"/>
<dbReference type="BioGRID" id="7648">
    <property type="interactions" value="27"/>
</dbReference>
<dbReference type="FunCoup" id="Q9LSD5">
    <property type="interactions" value="1720"/>
</dbReference>
<dbReference type="IntAct" id="Q9LSD5">
    <property type="interactions" value="6"/>
</dbReference>
<dbReference type="STRING" id="3702.Q9LSD5"/>
<dbReference type="PaxDb" id="3702-AT3G27010.1"/>
<dbReference type="ProteomicsDB" id="234168"/>
<dbReference type="EnsemblPlants" id="AT3G27010.1">
    <property type="protein sequence ID" value="AT3G27010.1"/>
    <property type="gene ID" value="AT3G27010"/>
</dbReference>
<dbReference type="EnsemblPlants" id="AT3G27010.2">
    <property type="protein sequence ID" value="AT3G27010.2"/>
    <property type="gene ID" value="AT3G27010"/>
</dbReference>
<dbReference type="GeneID" id="822318"/>
<dbReference type="Gramene" id="AT3G27010.1">
    <property type="protein sequence ID" value="AT3G27010.1"/>
    <property type="gene ID" value="AT3G27010"/>
</dbReference>
<dbReference type="Gramene" id="AT3G27010.2">
    <property type="protein sequence ID" value="AT3G27010.2"/>
    <property type="gene ID" value="AT3G27010"/>
</dbReference>
<dbReference type="KEGG" id="ath:AT3G27010"/>
<dbReference type="Araport" id="AT3G27010"/>
<dbReference type="TAIR" id="AT3G27010">
    <property type="gene designation" value="TCP20"/>
</dbReference>
<dbReference type="eggNOG" id="ENOG502QQMV">
    <property type="taxonomic scope" value="Eukaryota"/>
</dbReference>
<dbReference type="HOGENOM" id="CLU_070441_0_0_1"/>
<dbReference type="InParanoid" id="Q9LSD5"/>
<dbReference type="OMA" id="GSSRTNW"/>
<dbReference type="PhylomeDB" id="Q9LSD5"/>
<dbReference type="PRO" id="PR:Q9LSD5"/>
<dbReference type="Proteomes" id="UP000006548">
    <property type="component" value="Chromosome 3"/>
</dbReference>
<dbReference type="ExpressionAtlas" id="Q9LSD5">
    <property type="expression patterns" value="baseline and differential"/>
</dbReference>
<dbReference type="GO" id="GO:0005634">
    <property type="term" value="C:nucleus"/>
    <property type="evidence" value="ECO:0000314"/>
    <property type="project" value="TAIR"/>
</dbReference>
<dbReference type="GO" id="GO:0000987">
    <property type="term" value="F:cis-regulatory region sequence-specific DNA binding"/>
    <property type="evidence" value="ECO:0000314"/>
    <property type="project" value="TAIR"/>
</dbReference>
<dbReference type="GO" id="GO:0003677">
    <property type="term" value="F:DNA binding"/>
    <property type="evidence" value="ECO:0000353"/>
    <property type="project" value="TAIR"/>
</dbReference>
<dbReference type="GO" id="GO:0003700">
    <property type="term" value="F:DNA-binding transcription factor activity"/>
    <property type="evidence" value="ECO:0000314"/>
    <property type="project" value="TAIR"/>
</dbReference>
<dbReference type="GO" id="GO:0043565">
    <property type="term" value="F:sequence-specific DNA binding"/>
    <property type="evidence" value="ECO:0000353"/>
    <property type="project" value="TAIR"/>
</dbReference>
<dbReference type="GO" id="GO:0000976">
    <property type="term" value="F:transcription cis-regulatory region binding"/>
    <property type="evidence" value="ECO:0000353"/>
    <property type="project" value="TAIR"/>
</dbReference>
<dbReference type="GO" id="GO:0009653">
    <property type="term" value="P:anatomical structure morphogenesis"/>
    <property type="evidence" value="ECO:0000304"/>
    <property type="project" value="TAIR"/>
</dbReference>
<dbReference type="GO" id="GO:1900056">
    <property type="term" value="P:negative regulation of leaf senescence"/>
    <property type="evidence" value="ECO:0000316"/>
    <property type="project" value="TAIR"/>
</dbReference>
<dbReference type="GO" id="GO:0008361">
    <property type="term" value="P:regulation of cell size"/>
    <property type="evidence" value="ECO:0000316"/>
    <property type="project" value="TAIR"/>
</dbReference>
<dbReference type="InterPro" id="IPR017887">
    <property type="entry name" value="TF_TCP_subgr"/>
</dbReference>
<dbReference type="InterPro" id="IPR005333">
    <property type="entry name" value="Transcription_factor_TCP"/>
</dbReference>
<dbReference type="PANTHER" id="PTHR31072:SF4">
    <property type="entry name" value="TRANSCRIPTION FACTOR TCP20"/>
    <property type="match status" value="1"/>
</dbReference>
<dbReference type="PANTHER" id="PTHR31072">
    <property type="entry name" value="TRANSCRIPTION FACTOR TCP4-RELATED"/>
    <property type="match status" value="1"/>
</dbReference>
<dbReference type="Pfam" id="PF03634">
    <property type="entry name" value="TCP"/>
    <property type="match status" value="1"/>
</dbReference>
<dbReference type="PROSITE" id="PS51369">
    <property type="entry name" value="TCP"/>
    <property type="match status" value="1"/>
</dbReference>
<feature type="chain" id="PRO_0000330794" description="Transcription factor TCP20">
    <location>
        <begin position="1"/>
        <end position="314"/>
    </location>
</feature>
<feature type="domain" description="TCP" evidence="1">
    <location>
        <begin position="78"/>
        <end position="132"/>
    </location>
</feature>
<feature type="region of interest" description="Disordered" evidence="2">
    <location>
        <begin position="1"/>
        <end position="91"/>
    </location>
</feature>
<feature type="region of interest" description="Disordered" evidence="2">
    <location>
        <begin position="295"/>
        <end position="314"/>
    </location>
</feature>
<feature type="compositionally biased region" description="Basic and acidic residues" evidence="2">
    <location>
        <begin position="38"/>
        <end position="49"/>
    </location>
</feature>
<feature type="compositionally biased region" description="Basic and acidic residues" evidence="2">
    <location>
        <begin position="77"/>
        <end position="89"/>
    </location>
</feature>
<proteinExistence type="evidence at protein level"/>
<reference key="1">
    <citation type="submission" date="2000-12" db="EMBL/GenBank/DDBJ databases">
        <title>Functional studies of Arabidopsis thaliana receptor lectin-kinase, lecRK-a1.</title>
        <authorList>
            <person name="Herve C."/>
            <person name="Riou C."/>
            <person name="Dabos P."/>
            <person name="Lescure B."/>
        </authorList>
    </citation>
    <scope>NUCLEOTIDE SEQUENCE [MRNA]</scope>
    <source>
        <strain>cv. Columbia</strain>
    </source>
</reference>
<reference key="2">
    <citation type="journal article" date="2000" name="DNA Res.">
        <title>Structural analysis of Arabidopsis thaliana chromosome 3. I. Sequence features of the regions of 4,504,864 bp covered by sixty P1 and TAC clones.</title>
        <authorList>
            <person name="Sato S."/>
            <person name="Nakamura Y."/>
            <person name="Kaneko T."/>
            <person name="Katoh T."/>
            <person name="Asamizu E."/>
            <person name="Tabata S."/>
        </authorList>
    </citation>
    <scope>NUCLEOTIDE SEQUENCE [LARGE SCALE GENOMIC DNA]</scope>
    <source>
        <strain>cv. Columbia</strain>
    </source>
</reference>
<reference key="3">
    <citation type="journal article" date="2017" name="Plant J.">
        <title>Araport11: a complete reannotation of the Arabidopsis thaliana reference genome.</title>
        <authorList>
            <person name="Cheng C.Y."/>
            <person name="Krishnakumar V."/>
            <person name="Chan A.P."/>
            <person name="Thibaud-Nissen F."/>
            <person name="Schobel S."/>
            <person name="Town C.D."/>
        </authorList>
    </citation>
    <scope>GENOME REANNOTATION</scope>
    <source>
        <strain>cv. Columbia</strain>
    </source>
</reference>
<reference key="4">
    <citation type="journal article" date="2002" name="Science">
        <title>Functional annotation of a full-length Arabidopsis cDNA collection.</title>
        <authorList>
            <person name="Seki M."/>
            <person name="Narusaka M."/>
            <person name="Kamiya A."/>
            <person name="Ishida J."/>
            <person name="Satou M."/>
            <person name="Sakurai T."/>
            <person name="Nakajima M."/>
            <person name="Enju A."/>
            <person name="Akiyama K."/>
            <person name="Oono Y."/>
            <person name="Muramatsu M."/>
            <person name="Hayashizaki Y."/>
            <person name="Kawai J."/>
            <person name="Carninci P."/>
            <person name="Itoh M."/>
            <person name="Ishii Y."/>
            <person name="Arakawa T."/>
            <person name="Shibata K."/>
            <person name="Shinagawa A."/>
            <person name="Shinozaki K."/>
        </authorList>
    </citation>
    <scope>NUCLEOTIDE SEQUENCE [LARGE SCALE MRNA]</scope>
    <source>
        <strain>cv. Columbia</strain>
    </source>
</reference>
<reference key="5">
    <citation type="journal article" date="2003" name="Science">
        <title>Empirical analysis of transcriptional activity in the Arabidopsis genome.</title>
        <authorList>
            <person name="Yamada K."/>
            <person name="Lim J."/>
            <person name="Dale J.M."/>
            <person name="Chen H."/>
            <person name="Shinn P."/>
            <person name="Palm C.J."/>
            <person name="Southwick A.M."/>
            <person name="Wu H.C."/>
            <person name="Kim C.J."/>
            <person name="Nguyen M."/>
            <person name="Pham P.K."/>
            <person name="Cheuk R.F."/>
            <person name="Karlin-Newmann G."/>
            <person name="Liu S.X."/>
            <person name="Lam B."/>
            <person name="Sakano H."/>
            <person name="Wu T."/>
            <person name="Yu G."/>
            <person name="Miranda M."/>
            <person name="Quach H.L."/>
            <person name="Tripp M."/>
            <person name="Chang C.H."/>
            <person name="Lee J.M."/>
            <person name="Toriumi M.J."/>
            <person name="Chan M.M."/>
            <person name="Tang C.C."/>
            <person name="Onodera C.S."/>
            <person name="Deng J.M."/>
            <person name="Akiyama K."/>
            <person name="Ansari Y."/>
            <person name="Arakawa T."/>
            <person name="Banh J."/>
            <person name="Banno F."/>
            <person name="Bowser L."/>
            <person name="Brooks S.Y."/>
            <person name="Carninci P."/>
            <person name="Chao Q."/>
            <person name="Choy N."/>
            <person name="Enju A."/>
            <person name="Goldsmith A.D."/>
            <person name="Gurjal M."/>
            <person name="Hansen N.F."/>
            <person name="Hayashizaki Y."/>
            <person name="Johnson-Hopson C."/>
            <person name="Hsuan V.W."/>
            <person name="Iida K."/>
            <person name="Karnes M."/>
            <person name="Khan S."/>
            <person name="Koesema E."/>
            <person name="Ishida J."/>
            <person name="Jiang P.X."/>
            <person name="Jones T."/>
            <person name="Kawai J."/>
            <person name="Kamiya A."/>
            <person name="Meyers C."/>
            <person name="Nakajima M."/>
            <person name="Narusaka M."/>
            <person name="Seki M."/>
            <person name="Sakurai T."/>
            <person name="Satou M."/>
            <person name="Tamse R."/>
            <person name="Vaysberg M."/>
            <person name="Wallender E.K."/>
            <person name="Wong C."/>
            <person name="Yamamura Y."/>
            <person name="Yuan S."/>
            <person name="Shinozaki K."/>
            <person name="Davis R.W."/>
            <person name="Theologis A."/>
            <person name="Ecker J.R."/>
        </authorList>
    </citation>
    <scope>NUCLEOTIDE SEQUENCE [LARGE SCALE MRNA]</scope>
    <source>
        <strain>cv. Columbia</strain>
    </source>
</reference>
<reference key="6">
    <citation type="journal article" date="2003" name="Plant J.">
        <title>Internal telomeric repeats and 'TCP domain' protein-binding sites co-operate to regulate gene expression in Arabidopsis thaliana cycling cells.</title>
        <authorList>
            <person name="Tremousaygue D."/>
            <person name="Garnier L."/>
            <person name="Bardet C."/>
            <person name="Dabos P."/>
            <person name="Herve C."/>
            <person name="Lescure B."/>
        </authorList>
    </citation>
    <scope>FUNCTION</scope>
    <scope>INTERACTION WITH PURA1</scope>
</reference>
<reference key="7">
    <citation type="journal article" date="2005" name="Proc. Natl. Acad. Sci. U.S.A.">
        <title>Arabidopsis TCP20 links regulation of growth and cell division control pathways.</title>
        <authorList>
            <person name="Li C."/>
            <person name="Potuschak T."/>
            <person name="Colon-Carmona A."/>
            <person name="Gutierrez R.A."/>
            <person name="Doerner P."/>
        </authorList>
    </citation>
    <scope>FUNCTION</scope>
</reference>
<reference key="8">
    <citation type="journal article" date="2007" name="Plant Cell">
        <title>Arabidopsis BRANCHED1 acts as an integrator of branching signals within axillary buds.</title>
        <authorList>
            <person name="Aguilar-Martinez J.A."/>
            <person name="Poza-Carrion C."/>
            <person name="Cubas P."/>
        </authorList>
    </citation>
    <scope>GENE FAMILY</scope>
    <scope>NOMENCLATURE</scope>
</reference>
<reference key="9">
    <citation type="journal article" date="2014" name="J. Genet. Genomics">
        <title>SPOROCYTELESS is a novel embryophyte-specific transcription repressor that interacts with TPL and TCP proteins in Arabidopsis.</title>
        <authorList>
            <person name="Chen G.H."/>
            <person name="Sun J.Y."/>
            <person name="Liu M."/>
            <person name="Liu J."/>
            <person name="Yang W.C."/>
        </authorList>
    </citation>
    <scope>INTERACTION WITH SPL</scope>
</reference>
<protein>
    <recommendedName>
        <fullName>Transcription factor TCP20</fullName>
    </recommendedName>
</protein>
<evidence type="ECO:0000255" key="1">
    <source>
        <dbReference type="PROSITE-ProRule" id="PRU00701"/>
    </source>
</evidence>
<evidence type="ECO:0000256" key="2">
    <source>
        <dbReference type="SAM" id="MobiDB-lite"/>
    </source>
</evidence>
<evidence type="ECO:0000269" key="3">
    <source>
    </source>
</evidence>
<evidence type="ECO:0000269" key="4">
    <source>
    </source>
</evidence>
<evidence type="ECO:0000269" key="5">
    <source>
    </source>
</evidence>
<evidence type="ECO:0000305" key="6"/>
<comment type="function">
    <text evidence="3 4">Transcription factor that binds to the site II motif (3'-TGGGCC/T-5') in the promoter of PCNA-2 and to 3'-GCCCG/A-5' elements in the promoters of cyclin CYCB1-1 and ribosomal protein genes.</text>
</comment>
<comment type="subunit">
    <text evidence="3 5">Interacts with PURA1 (PubMed:12631321). Interacts with SPL (PubMed:25527103).</text>
</comment>
<comment type="subcellular location">
    <subcellularLocation>
        <location evidence="6">Nucleus</location>
    </subcellularLocation>
</comment>
<organism>
    <name type="scientific">Arabidopsis thaliana</name>
    <name type="common">Mouse-ear cress</name>
    <dbReference type="NCBI Taxonomy" id="3702"/>
    <lineage>
        <taxon>Eukaryota</taxon>
        <taxon>Viridiplantae</taxon>
        <taxon>Streptophyta</taxon>
        <taxon>Embryophyta</taxon>
        <taxon>Tracheophyta</taxon>
        <taxon>Spermatophyta</taxon>
        <taxon>Magnoliopsida</taxon>
        <taxon>eudicotyledons</taxon>
        <taxon>Gunneridae</taxon>
        <taxon>Pentapetalae</taxon>
        <taxon>rosids</taxon>
        <taxon>malvids</taxon>
        <taxon>Brassicales</taxon>
        <taxon>Brassicaceae</taxon>
        <taxon>Camelineae</taxon>
        <taxon>Arabidopsis</taxon>
    </lineage>
</organism>
<keyword id="KW-0238">DNA-binding</keyword>
<keyword id="KW-0539">Nucleus</keyword>
<keyword id="KW-1185">Reference proteome</keyword>
<keyword id="KW-0804">Transcription</keyword>
<keyword id="KW-0805">Transcription regulation</keyword>
<gene>
    <name type="primary">TCP20</name>
    <name type="synonym">PCF1</name>
    <name type="ordered locus">At3g27010</name>
    <name type="ORF">MOJ10.8</name>
</gene>
<accession>Q9LSD5</accession>
<name>TCP20_ARATH</name>